<keyword id="KW-0238">DNA-binding</keyword>
<keyword id="KW-0479">Metal-binding</keyword>
<keyword id="KW-1185">Reference proteome</keyword>
<keyword id="KW-0862">Zinc</keyword>
<keyword id="KW-0863">Zinc-finger</keyword>
<organism>
    <name type="scientific">Shallot virus X</name>
    <name type="common">ShVX</name>
    <dbReference type="NCBI Taxonomy" id="31770"/>
    <lineage>
        <taxon>Viruses</taxon>
        <taxon>Riboviria</taxon>
        <taxon>Orthornavirae</taxon>
        <taxon>Kitrinoviricota</taxon>
        <taxon>Alsuviricetes</taxon>
        <taxon>Tymovirales</taxon>
        <taxon>Alphaflexiviridae</taxon>
        <taxon>Allexivirus</taxon>
        <taxon>Acarallexivirus</taxon>
    </lineage>
</organism>
<name>VNBP_SHVX</name>
<evidence type="ECO:0000255" key="1"/>
<organismHost>
    <name type="scientific">Allium cepa var. aggregatum</name>
    <name type="common">Shallot</name>
    <name type="synonym">Allium ascalonicum</name>
    <dbReference type="NCBI Taxonomy" id="28911"/>
</organismHost>
<gene>
    <name type="ORF">ORF6</name>
</gene>
<reference key="1">
    <citation type="journal article" date="1992" name="J. Gen. Virol.">
        <title>Nucleotide sequence of shallot virus X RNA reveals a 5'-proximal cistron closely related to those of potexviruses and a unique arrangement of the 3'-proximal cistrons.</title>
        <authorList>
            <person name="Kanyuka K.V."/>
            <person name="Vishnichenko V.K."/>
            <person name="Levay K.E."/>
            <person name="Kondrikov D.Y."/>
            <person name="Ryabov E.V."/>
            <person name="Zavriev S.K."/>
        </authorList>
    </citation>
    <scope>NUCLEOTIDE SEQUENCE [GENOMIC RNA]</scope>
</reference>
<protein>
    <recommendedName>
        <fullName>14.7 kDa protein</fullName>
    </recommendedName>
    <alternativeName>
        <fullName>Putative nucleic acid-binding protein</fullName>
    </alternativeName>
</protein>
<feature type="chain" id="PRO_0000222658" description="14.7 kDa protein">
    <location>
        <begin position="1"/>
        <end position="128"/>
    </location>
</feature>
<feature type="zinc finger region" description="C4-type" evidence="1">
    <location>
        <begin position="65"/>
        <end position="94"/>
    </location>
</feature>
<proteinExistence type="predicted"/>
<dbReference type="EMBL" id="M97264">
    <property type="protein sequence ID" value="AAA47792.1"/>
    <property type="molecule type" value="Genomic_RNA"/>
</dbReference>
<dbReference type="PIR" id="JQ1739">
    <property type="entry name" value="JQ1739"/>
</dbReference>
<dbReference type="RefSeq" id="NP_620653.1">
    <property type="nucleotide sequence ID" value="NC_003795.1"/>
</dbReference>
<dbReference type="SMR" id="Q04580"/>
<dbReference type="KEGG" id="vg:944366"/>
<dbReference type="OrthoDB" id="18564at10239"/>
<dbReference type="Proteomes" id="UP000001663">
    <property type="component" value="Genome"/>
</dbReference>
<dbReference type="GO" id="GO:0003677">
    <property type="term" value="F:DNA binding"/>
    <property type="evidence" value="ECO:0007669"/>
    <property type="project" value="UniProtKB-KW"/>
</dbReference>
<dbReference type="GO" id="GO:0008270">
    <property type="term" value="F:zinc ion binding"/>
    <property type="evidence" value="ECO:0007669"/>
    <property type="project" value="UniProtKB-KW"/>
</dbReference>
<dbReference type="InterPro" id="IPR008891">
    <property type="entry name" value="Viral_NABP"/>
</dbReference>
<dbReference type="Pfam" id="PF05515">
    <property type="entry name" value="Viral_NABP"/>
    <property type="match status" value="1"/>
</dbReference>
<comment type="function">
    <text>May act as a regulatory factor during viral transcription.</text>
</comment>
<sequence length="128" mass="14742">MHPHDLNLLCCLHFSKPSLPNDLKTLLFRACETSCKLNRRLLDNKPFQGTSKCAKRRRAKRYNRCFDCGAYLYDDHVCKRFTSRSNSDCLSVIHQGPAKLYAEGAYRANSDAEQLIMNDMLLIKSLKL</sequence>
<accession>Q04580</accession>